<reference key="1">
    <citation type="submission" date="2007-11" db="EMBL/GenBank/DDBJ databases">
        <authorList>
            <consortium name="The Salmonella enterica serovar Paratyphi B Genome Sequencing Project"/>
            <person name="McClelland M."/>
            <person name="Sanderson E.K."/>
            <person name="Porwollik S."/>
            <person name="Spieth J."/>
            <person name="Clifton W.S."/>
            <person name="Fulton R."/>
            <person name="Cordes M."/>
            <person name="Wollam A."/>
            <person name="Shah N."/>
            <person name="Pepin K."/>
            <person name="Bhonagiri V."/>
            <person name="Nash W."/>
            <person name="Johnson M."/>
            <person name="Thiruvilangam P."/>
            <person name="Wilson R."/>
        </authorList>
    </citation>
    <scope>NUCLEOTIDE SEQUENCE [LARGE SCALE GENOMIC DNA]</scope>
    <source>
        <strain>ATCC BAA-1250 / SPB7</strain>
    </source>
</reference>
<comment type="similarity">
    <text evidence="1">Belongs to the UPF0231 family.</text>
</comment>
<dbReference type="EMBL" id="CP000886">
    <property type="protein sequence ID" value="ABX65640.1"/>
    <property type="molecule type" value="Genomic_DNA"/>
</dbReference>
<dbReference type="RefSeq" id="WP_000384308.1">
    <property type="nucleotide sequence ID" value="NC_010102.1"/>
</dbReference>
<dbReference type="SMR" id="A9MZQ5"/>
<dbReference type="KEGG" id="spq:SPAB_00198"/>
<dbReference type="PATRIC" id="fig|1016998.12.peg.191"/>
<dbReference type="HOGENOM" id="CLU_139226_0_0_6"/>
<dbReference type="BioCyc" id="SENT1016998:SPAB_RS00800-MONOMER"/>
<dbReference type="Proteomes" id="UP000008556">
    <property type="component" value="Chromosome"/>
</dbReference>
<dbReference type="HAMAP" id="MF_01053">
    <property type="entry name" value="UPF0231"/>
    <property type="match status" value="1"/>
</dbReference>
<dbReference type="InterPro" id="IPR008249">
    <property type="entry name" value="UPF0231"/>
</dbReference>
<dbReference type="NCBIfam" id="NF003574">
    <property type="entry name" value="PRK05248.1-1"/>
    <property type="match status" value="1"/>
</dbReference>
<dbReference type="NCBIfam" id="NF003576">
    <property type="entry name" value="PRK05248.1-3"/>
    <property type="match status" value="1"/>
</dbReference>
<dbReference type="Pfam" id="PF06062">
    <property type="entry name" value="UPF0231"/>
    <property type="match status" value="1"/>
</dbReference>
<dbReference type="PIRSF" id="PIRSF006287">
    <property type="entry name" value="UCP006287"/>
    <property type="match status" value="1"/>
</dbReference>
<organism>
    <name type="scientific">Salmonella paratyphi B (strain ATCC BAA-1250 / SPB7)</name>
    <dbReference type="NCBI Taxonomy" id="1016998"/>
    <lineage>
        <taxon>Bacteria</taxon>
        <taxon>Pseudomonadati</taxon>
        <taxon>Pseudomonadota</taxon>
        <taxon>Gammaproteobacteria</taxon>
        <taxon>Enterobacterales</taxon>
        <taxon>Enterobacteriaceae</taxon>
        <taxon>Salmonella</taxon>
    </lineage>
</organism>
<accession>A9MZQ5</accession>
<gene>
    <name evidence="1" type="primary">yacL</name>
    <name type="ordered locus">SPAB_00198</name>
</gene>
<feature type="chain" id="PRO_1000084432" description="UPF0231 protein YacL">
    <location>
        <begin position="1"/>
        <end position="120"/>
    </location>
</feature>
<evidence type="ECO:0000255" key="1">
    <source>
        <dbReference type="HAMAP-Rule" id="MF_01053"/>
    </source>
</evidence>
<sequence length="120" mass="13888">MDYEFLRDVTGGVKVRMSMGHEVVGHWFNEEVKDNLSLLDEVEQAARTVKGSERSWQRAGHEYTIWMDGEEVMIRANQLDFSGDEMEEGMSYYDEESLSLCGMEDFLRVVAAYREFVSKA</sequence>
<proteinExistence type="inferred from homology"/>
<name>YACL_SALPB</name>
<protein>
    <recommendedName>
        <fullName evidence="1">UPF0231 protein YacL</fullName>
    </recommendedName>
</protein>